<accession>Q1XH05</accession>
<name>HGL1B_WHEAT</name>
<evidence type="ECO:0000250" key="1">
    <source>
        <dbReference type="UniProtKB" id="Q8L7J2"/>
    </source>
</evidence>
<evidence type="ECO:0000250" key="2">
    <source>
        <dbReference type="UniProtKB" id="Q9SPP9"/>
    </source>
</evidence>
<evidence type="ECO:0000255" key="3">
    <source>
        <dbReference type="PROSITE-ProRule" id="PRU10055"/>
    </source>
</evidence>
<evidence type="ECO:0000269" key="4">
    <source>
    </source>
</evidence>
<evidence type="ECO:0000269" key="5">
    <source>
    </source>
</evidence>
<evidence type="ECO:0000269" key="6">
    <source>
    </source>
</evidence>
<evidence type="ECO:0000305" key="7"/>
<evidence type="ECO:0000305" key="8">
    <source>
    </source>
</evidence>
<evidence type="ECO:0000305" key="9">
    <source>
    </source>
</evidence>
<evidence type="ECO:0007744" key="10">
    <source>
        <dbReference type="PDB" id="3AIR"/>
    </source>
</evidence>
<evidence type="ECO:0007744" key="11">
    <source>
        <dbReference type="PDB" id="3AIS"/>
    </source>
</evidence>
<evidence type="ECO:0007829" key="12">
    <source>
        <dbReference type="PDB" id="2DGA"/>
    </source>
</evidence>
<evidence type="ECO:0007829" key="13">
    <source>
        <dbReference type="PDB" id="3AIQ"/>
    </source>
</evidence>
<protein>
    <recommendedName>
        <fullName>4-hydroxy-7-methoxy-3-oxo-3,4-dihydro-2H-1,4-benzoxazin-2-yl glucoside beta-D-glucosidase 1b, chloroplastic</fullName>
        <ecNumber evidence="4 5">3.2.1.182</ecNumber>
    </recommendedName>
    <alternativeName>
        <fullName>Beta-glucosidase 1b</fullName>
        <shortName>Taglu1b</shortName>
        <ecNumber evidence="4 5">3.2.1.21</ecNumber>
    </alternativeName>
</protein>
<dbReference type="EC" id="3.2.1.182" evidence="4 5"/>
<dbReference type="EC" id="3.2.1.21" evidence="4 5"/>
<dbReference type="EMBL" id="AB236422">
    <property type="protein sequence ID" value="BAE92259.1"/>
    <property type="molecule type" value="mRNA"/>
</dbReference>
<dbReference type="PDB" id="2DGA">
    <property type="method" value="X-ray"/>
    <property type="resolution" value="1.80 A"/>
    <property type="chains" value="A=50-569"/>
</dbReference>
<dbReference type="PDB" id="3AIQ">
    <property type="method" value="X-ray"/>
    <property type="resolution" value="1.90 A"/>
    <property type="chains" value="A=50-569"/>
</dbReference>
<dbReference type="PDB" id="3AIR">
    <property type="method" value="X-ray"/>
    <property type="resolution" value="2.00 A"/>
    <property type="chains" value="A=50-569"/>
</dbReference>
<dbReference type="PDB" id="3AIS">
    <property type="method" value="X-ray"/>
    <property type="resolution" value="2.20 A"/>
    <property type="chains" value="A=50-569"/>
</dbReference>
<dbReference type="PDBsum" id="2DGA"/>
<dbReference type="PDBsum" id="3AIQ"/>
<dbReference type="PDBsum" id="3AIR"/>
<dbReference type="PDBsum" id="3AIS"/>
<dbReference type="SMR" id="Q1XH05"/>
<dbReference type="STRING" id="4565.Q1XH05"/>
<dbReference type="CAZy" id="GH1">
    <property type="family name" value="Glycoside Hydrolase Family 1"/>
</dbReference>
<dbReference type="EnsemblPlants" id="TraesCS2B02G599800.1">
    <property type="protein sequence ID" value="TraesCS2B02G599800.1"/>
    <property type="gene ID" value="TraesCS2B02G599800"/>
</dbReference>
<dbReference type="EnsemblPlants" id="TraesCS2B03G1500200.1">
    <property type="protein sequence ID" value="TraesCS2B03G1500200.1.CDS"/>
    <property type="gene ID" value="TraesCS2B03G1500200"/>
</dbReference>
<dbReference type="EnsemblPlants" id="TraesNOR2B03G01085520.1">
    <property type="protein sequence ID" value="TraesNOR2B03G01085520.1"/>
    <property type="gene ID" value="TraesNOR2B03G01085520"/>
</dbReference>
<dbReference type="Gramene" id="TraesCS2B02G599800.1">
    <property type="protein sequence ID" value="TraesCS2B02G599800.1"/>
    <property type="gene ID" value="TraesCS2B02G599800"/>
</dbReference>
<dbReference type="Gramene" id="TraesCS2B03G1500200.1">
    <property type="protein sequence ID" value="TraesCS2B03G1500200.1.CDS"/>
    <property type="gene ID" value="TraesCS2B03G1500200"/>
</dbReference>
<dbReference type="Gramene" id="TraesNOR2B03G01085520.1">
    <property type="protein sequence ID" value="TraesNOR2B03G01085520.1"/>
    <property type="gene ID" value="TraesNOR2B03G01085520"/>
</dbReference>
<dbReference type="OMA" id="DICYAKF"/>
<dbReference type="OrthoDB" id="774279at2759"/>
<dbReference type="BRENDA" id="3.2.1.182">
    <property type="organism ID" value="6500"/>
</dbReference>
<dbReference type="BRENDA" id="3.2.1.21">
    <property type="organism ID" value="6500"/>
</dbReference>
<dbReference type="SABIO-RK" id="Q1XH05"/>
<dbReference type="EvolutionaryTrace" id="Q1XH05"/>
<dbReference type="Proteomes" id="UP000019116">
    <property type="component" value="Chromosome 2B"/>
</dbReference>
<dbReference type="ExpressionAtlas" id="Q1XH05">
    <property type="expression patterns" value="baseline"/>
</dbReference>
<dbReference type="GO" id="GO:0009507">
    <property type="term" value="C:chloroplast"/>
    <property type="evidence" value="ECO:0007669"/>
    <property type="project" value="UniProtKB-SubCell"/>
</dbReference>
<dbReference type="GO" id="GO:0008422">
    <property type="term" value="F:beta-glucosidase activity"/>
    <property type="evidence" value="ECO:0000318"/>
    <property type="project" value="GO_Central"/>
</dbReference>
<dbReference type="GO" id="GO:0102726">
    <property type="term" value="F:DIMBOA glucoside beta-D-glucosidase activity"/>
    <property type="evidence" value="ECO:0007669"/>
    <property type="project" value="UniProtKB-EC"/>
</dbReference>
<dbReference type="GO" id="GO:0005975">
    <property type="term" value="P:carbohydrate metabolic process"/>
    <property type="evidence" value="ECO:0007669"/>
    <property type="project" value="InterPro"/>
</dbReference>
<dbReference type="FunFam" id="3.20.20.80:FF:000041">
    <property type="entry name" value="Beta-glucosidase 7"/>
    <property type="match status" value="1"/>
</dbReference>
<dbReference type="Gene3D" id="3.20.20.80">
    <property type="entry name" value="Glycosidases"/>
    <property type="match status" value="1"/>
</dbReference>
<dbReference type="InterPro" id="IPR001360">
    <property type="entry name" value="Glyco_hydro_1"/>
</dbReference>
<dbReference type="InterPro" id="IPR018120">
    <property type="entry name" value="Glyco_hydro_1_AS"/>
</dbReference>
<dbReference type="InterPro" id="IPR033132">
    <property type="entry name" value="Glyco_hydro_1_N_CS"/>
</dbReference>
<dbReference type="InterPro" id="IPR017853">
    <property type="entry name" value="Glycoside_hydrolase_SF"/>
</dbReference>
<dbReference type="PANTHER" id="PTHR10353:SF326">
    <property type="entry name" value="4-HYDROXY-7-METHOXY-3-OXO-3,4-DIHYDRO-2H-1,4-BENZOXAZIN-2-YL GLUCOSIDE BETA-D-GLUCOSIDASE 1, CHLOROPLASTIC"/>
    <property type="match status" value="1"/>
</dbReference>
<dbReference type="PANTHER" id="PTHR10353">
    <property type="entry name" value="GLYCOSYL HYDROLASE"/>
    <property type="match status" value="1"/>
</dbReference>
<dbReference type="Pfam" id="PF00232">
    <property type="entry name" value="Glyco_hydro_1"/>
    <property type="match status" value="1"/>
</dbReference>
<dbReference type="PRINTS" id="PR00131">
    <property type="entry name" value="GLHYDRLASE1"/>
</dbReference>
<dbReference type="SUPFAM" id="SSF51445">
    <property type="entry name" value="(Trans)glycosidases"/>
    <property type="match status" value="1"/>
</dbReference>
<dbReference type="PROSITE" id="PS00572">
    <property type="entry name" value="GLYCOSYL_HYDROL_F1_1"/>
    <property type="match status" value="1"/>
</dbReference>
<dbReference type="PROSITE" id="PS00653">
    <property type="entry name" value="GLYCOSYL_HYDROL_F1_2"/>
    <property type="match status" value="1"/>
</dbReference>
<sequence length="569" mass="64482">MALLAAATLNPTTHLSLRSRAGRNSENLWLRSTASSQKSKGRFCNLTIRAGTPSKPAEPIGPVFTKLKPWQIPKRDWFDKDFLFGASTSAYQIEGAWNEDGKGPSTWDHFCHTYPERISDMTNGDVAANSYHLYEEDVKALKDMGMKVYRFSISWSRILPDGTGKVNQAGIDYYNKLINSLIDNDIVPYVTIWHWDTPQALEDKYGGFLNRQIVDDYKQFAEVCFKNFGDRVKNWFTFNEPHTYCCFSYGEGIHAPGRCSPGMDCAVPEGDSLREPYTAGHHILLAHAEAVQLFKARYNMHGDSKIGMAFDVMGYEPYQDSFLDDQARERSIDYNMGWFLEPVVRGDYPFSMRSLIGDRLPMFTKEEQEKLASSCDIMGLNYYTSRFSKHVDMSPDFTPTLNTDDAYASSETTGSDGNDIGPITGTYWIYMYPKGLTDLLLIMKEKYGNPPVFITENGIADVEGDESMPDPLDDWKRLDYLQRHISAVKDAIDQGADVRGHFTWGLIDNFEWSLGYSSRFGLVYIDKNDGNKRKLKKSAKWFSKFNSVPKPLLKTTNNNATMTAASVSV</sequence>
<feature type="transit peptide" description="Chloroplast" evidence="4">
    <location>
        <begin position="1"/>
        <end position="50"/>
    </location>
</feature>
<feature type="chain" id="PRO_0000424098" description="4-hydroxy-7-methoxy-3-oxo-3,4-dihydro-2H-1,4-benzoxazin-2-yl glucoside beta-D-glucosidase 1b, chloroplastic">
    <location>
        <begin position="51"/>
        <end position="569"/>
    </location>
</feature>
<feature type="active site" description="Proton donor" evidence="1">
    <location>
        <position position="240"/>
    </location>
</feature>
<feature type="active site" description="Nucleophile" evidence="3">
    <location>
        <position position="456"/>
    </location>
</feature>
<feature type="binding site" evidence="9 10 11">
    <location>
        <position position="92"/>
    </location>
    <ligand>
        <name>a beta-D-glucoside</name>
        <dbReference type="ChEBI" id="CHEBI:22798"/>
    </ligand>
</feature>
<feature type="binding site" evidence="1">
    <location>
        <position position="194"/>
    </location>
    <ligand>
        <name>a beta-D-glucoside</name>
        <dbReference type="ChEBI" id="CHEBI:22798"/>
    </ligand>
</feature>
<feature type="binding site" evidence="9 10">
    <location>
        <begin position="239"/>
        <end position="240"/>
    </location>
    <ligand>
        <name>a beta-D-glucoside</name>
        <dbReference type="ChEBI" id="CHEBI:22798"/>
    </ligand>
</feature>
<feature type="binding site" evidence="1">
    <location>
        <position position="383"/>
    </location>
    <ligand>
        <name>a beta-D-glucoside</name>
        <dbReference type="ChEBI" id="CHEBI:22798"/>
    </ligand>
</feature>
<feature type="binding site" evidence="2">
    <location>
        <position position="456"/>
    </location>
    <ligand>
        <name>a beta-D-glucoside</name>
        <dbReference type="ChEBI" id="CHEBI:22798"/>
    </ligand>
</feature>
<feature type="binding site" evidence="9 11">
    <location>
        <position position="504"/>
    </location>
    <ligand>
        <name>a beta-D-glucoside</name>
        <dbReference type="ChEBI" id="CHEBI:22798"/>
    </ligand>
</feature>
<feature type="binding site" evidence="9 10 11">
    <location>
        <begin position="511"/>
        <end position="512"/>
    </location>
    <ligand>
        <name>a beta-D-glucoside</name>
        <dbReference type="ChEBI" id="CHEBI:22798"/>
    </ligand>
</feature>
<feature type="binding site" evidence="9 11">
    <location>
        <position position="520"/>
    </location>
    <ligand>
        <name>a beta-D-glucoside</name>
        <dbReference type="ChEBI" id="CHEBI:22798"/>
    </ligand>
</feature>
<feature type="disulfide bond" evidence="5">
    <location>
        <begin position="259"/>
        <end position="265"/>
    </location>
</feature>
<feature type="helix" evidence="12">
    <location>
        <begin position="69"/>
        <end position="71"/>
    </location>
</feature>
<feature type="helix" evidence="12">
    <location>
        <begin position="75"/>
        <end position="77"/>
    </location>
</feature>
<feature type="strand" evidence="12">
    <location>
        <begin position="83"/>
        <end position="87"/>
    </location>
</feature>
<feature type="helix" evidence="12">
    <location>
        <begin position="90"/>
        <end position="93"/>
    </location>
</feature>
<feature type="helix" evidence="13">
    <location>
        <begin position="99"/>
        <end position="101"/>
    </location>
</feature>
<feature type="helix" evidence="12">
    <location>
        <begin position="106"/>
        <end position="113"/>
    </location>
</feature>
<feature type="helix" evidence="12">
    <location>
        <begin position="115"/>
        <end position="117"/>
    </location>
</feature>
<feature type="turn" evidence="12">
    <location>
        <begin position="124"/>
        <end position="128"/>
    </location>
</feature>
<feature type="helix" evidence="12">
    <location>
        <begin position="130"/>
        <end position="144"/>
    </location>
</feature>
<feature type="strand" evidence="12">
    <location>
        <begin position="147"/>
        <end position="152"/>
    </location>
</feature>
<feature type="helix" evidence="12">
    <location>
        <begin position="155"/>
        <end position="158"/>
    </location>
</feature>
<feature type="strand" evidence="12">
    <location>
        <begin position="162"/>
        <end position="165"/>
    </location>
</feature>
<feature type="helix" evidence="12">
    <location>
        <begin position="168"/>
        <end position="183"/>
    </location>
</feature>
<feature type="strand" evidence="12">
    <location>
        <begin position="187"/>
        <end position="195"/>
    </location>
</feature>
<feature type="helix" evidence="12">
    <location>
        <begin position="199"/>
        <end position="205"/>
    </location>
</feature>
<feature type="helix" evidence="12">
    <location>
        <begin position="207"/>
        <end position="209"/>
    </location>
</feature>
<feature type="helix" evidence="12">
    <location>
        <begin position="213"/>
        <end position="228"/>
    </location>
</feature>
<feature type="turn" evidence="12">
    <location>
        <begin position="229"/>
        <end position="231"/>
    </location>
</feature>
<feature type="strand" evidence="12">
    <location>
        <begin position="234"/>
        <end position="239"/>
    </location>
</feature>
<feature type="helix" evidence="12">
    <location>
        <begin position="241"/>
        <end position="249"/>
    </location>
</feature>
<feature type="strand" evidence="12">
    <location>
        <begin position="263"/>
        <end position="267"/>
    </location>
</feature>
<feature type="turn" evidence="12">
    <location>
        <begin position="272"/>
        <end position="274"/>
    </location>
</feature>
<feature type="helix" evidence="12">
    <location>
        <begin position="275"/>
        <end position="297"/>
    </location>
</feature>
<feature type="strand" evidence="12">
    <location>
        <begin position="305"/>
        <end position="321"/>
    </location>
</feature>
<feature type="helix" evidence="12">
    <location>
        <begin position="322"/>
        <end position="335"/>
    </location>
</feature>
<feature type="helix" evidence="12">
    <location>
        <begin position="337"/>
        <end position="345"/>
    </location>
</feature>
<feature type="helix" evidence="12">
    <location>
        <begin position="350"/>
        <end position="356"/>
    </location>
</feature>
<feature type="helix" evidence="12">
    <location>
        <begin position="357"/>
        <end position="359"/>
    </location>
</feature>
<feature type="helix" evidence="12">
    <location>
        <begin position="365"/>
        <end position="371"/>
    </location>
</feature>
<feature type="strand" evidence="12">
    <location>
        <begin position="376"/>
        <end position="390"/>
    </location>
</feature>
<feature type="helix" evidence="12">
    <location>
        <begin position="402"/>
        <end position="406"/>
    </location>
</feature>
<feature type="strand" evidence="12">
    <location>
        <begin position="408"/>
        <end position="413"/>
    </location>
</feature>
<feature type="strand" evidence="12">
    <location>
        <begin position="419"/>
        <end position="421"/>
    </location>
</feature>
<feature type="helix" evidence="12">
    <location>
        <begin position="433"/>
        <end position="445"/>
    </location>
</feature>
<feature type="strand" evidence="12">
    <location>
        <begin position="452"/>
        <end position="456"/>
    </location>
</feature>
<feature type="helix" evidence="12">
    <location>
        <begin position="475"/>
        <end position="493"/>
    </location>
</feature>
<feature type="strand" evidence="12">
    <location>
        <begin position="498"/>
        <end position="504"/>
    </location>
</feature>
<feature type="helix" evidence="12">
    <location>
        <begin position="512"/>
        <end position="517"/>
    </location>
</feature>
<feature type="strand" evidence="12">
    <location>
        <begin position="522"/>
        <end position="525"/>
    </location>
</feature>
<feature type="turn" evidence="12">
    <location>
        <begin position="527"/>
        <end position="531"/>
    </location>
</feature>
<feature type="strand" evidence="12">
    <location>
        <begin position="533"/>
        <end position="535"/>
    </location>
</feature>
<feature type="helix" evidence="12">
    <location>
        <begin position="537"/>
        <end position="545"/>
    </location>
</feature>
<organism>
    <name type="scientific">Triticum aestivum</name>
    <name type="common">Wheat</name>
    <dbReference type="NCBI Taxonomy" id="4565"/>
    <lineage>
        <taxon>Eukaryota</taxon>
        <taxon>Viridiplantae</taxon>
        <taxon>Streptophyta</taxon>
        <taxon>Embryophyta</taxon>
        <taxon>Tracheophyta</taxon>
        <taxon>Spermatophyta</taxon>
        <taxon>Magnoliopsida</taxon>
        <taxon>Liliopsida</taxon>
        <taxon>Poales</taxon>
        <taxon>Poaceae</taxon>
        <taxon>BOP clade</taxon>
        <taxon>Pooideae</taxon>
        <taxon>Triticodae</taxon>
        <taxon>Triticeae</taxon>
        <taxon>Triticinae</taxon>
        <taxon>Triticum</taxon>
    </lineage>
</organism>
<comment type="function">
    <text evidence="4 5">Acts in defense of young plant parts against pests via the production of hydroxamic acids from hydroxamic acid glucosides. Enzymatic activity is highly correlated with plant growth. The preferred substrate is DIMBOA-beta-D-glucoside.</text>
</comment>
<comment type="catalytic activity">
    <reaction evidence="4 5">
        <text>Hydrolysis of terminal, non-reducing beta-D-glucosyl residues with release of beta-D-glucose.</text>
        <dbReference type="EC" id="3.2.1.21"/>
    </reaction>
</comment>
<comment type="catalytic activity">
    <reaction evidence="4 5">
        <text>DIMBOA beta-D-glucoside + H2O = DIMBOA + D-glucose</text>
        <dbReference type="Rhea" id="RHEA:33975"/>
        <dbReference type="ChEBI" id="CHEBI:4167"/>
        <dbReference type="ChEBI" id="CHEBI:15377"/>
        <dbReference type="ChEBI" id="CHEBI:18048"/>
        <dbReference type="ChEBI" id="CHEBI:37573"/>
        <dbReference type="EC" id="3.2.1.182"/>
    </reaction>
</comment>
<comment type="catalytic activity">
    <reaction evidence="4 5">
        <text>DIBOA beta-D-glucoside + H2O = DIBOA + D-glucose</text>
        <dbReference type="Rhea" id="RHEA:33979"/>
        <dbReference type="ChEBI" id="CHEBI:4167"/>
        <dbReference type="ChEBI" id="CHEBI:15377"/>
        <dbReference type="ChEBI" id="CHEBI:63558"/>
        <dbReference type="ChEBI" id="CHEBI:63670"/>
        <dbReference type="EC" id="3.2.1.182"/>
    </reaction>
</comment>
<comment type="biophysicochemical properties">
    <kinetics>
        <KM evidence="4">1.34 mM for DIBOA-beta-D-glucoside (with native hexamer)</KM>
        <KM evidence="4">1.44 mM for DIBOA-beta-D-glucoside (with recombinant enzyme)</KM>
        <KM evidence="4">0.272 mM for DIMBOA-beta-D-glucoside (with native hexamer)</KM>
        <KM evidence="4">0.29 mM for DIMBOA-beta-D-glucoside (with recombinant enzyme)</KM>
        <KM evidence="4">2.02 mM for HBOA-beta-D-glucoside (with native hexamer)</KM>
        <KM evidence="4">0.32 mM for HMBOA-beta-D-glucoside (with native hexamer)</KM>
        <KM evidence="4">1.7 mM for p-nitrophenyl beta-D-glucopyranoside (with native hexamer)</KM>
        <KM evidence="4">2.16 mM for p-nitrophenyl beta-D-glucopyranoside (with recombinant enzyme)</KM>
        <KM evidence="4">1.78 mM for p-nitrophenyl beta-D-galactopyranoside (with native hexamer)</KM>
        <KM evidence="4">3.11 mM for p-nitrophenyl beta-D-xyloside (with native hexamer)</KM>
        <KM evidence="4">0.67 mM for p-nitrophenyl beta-D-fucoside (with native hexamer)</KM>
        <KM evidence="4">0.24 mM for esculin (with native hexamer)</KM>
        <Vmax evidence="4">1060.0 nmol/sec/mg enzyme with DIBOA-beta-D-glucoside as substrate (with native hexamer)</Vmax>
        <Vmax evidence="4">4100.0 nmol/sec/mg enzyme with DIMBOA-beta-D-glucoside as substrate (with native hexamer)</Vmax>
        <Vmax evidence="4">220.0 nmol/sec/mg enzyme with HBOA-beta-D-glucoside as substrate (with native hexamer)</Vmax>
        <Vmax evidence="4">540.0 nmol/sec/mg enzyme with HMBOA-beta-D-glucoside as substrate (with native hexamer)</Vmax>
        <Vmax evidence="4">520.0 nmol/sec/mg enzyme with p-nitrophenyl beta-D-glucopyranoside as substrate (with native hexamer)</Vmax>
        <Vmax evidence="4">47.0 nmol/sec/mg enzyme with p-nitrophenyl beta-D-galactopyranoside as substrate (with native hexamer)</Vmax>
        <Vmax evidence="4">35.0 nmol/sec/mg enzyme with p-nitrophenyl beta-D-xyloside as substrate (with native hexamer)</Vmax>
        <Vmax evidence="4">1080.0 nmol/sec/mg enzyme with p-nitrophenyl beta-D-fucoside as substrate (with native hexamer)</Vmax>
        <Vmax evidence="4">320.0 nmol/sec/mg enzyme with esculin as substrate (with native hexamer)</Vmax>
        <text>kcat is 214 sec(-1) with DIBOA-beta-D-glucoside as substrate (with recombinant enzyme). kcat is 1201 sec(-1) with DIMBOA-beta-D-glucoside as substrate (with recombinant enzyme). kcat is 128.2 sec(-1) with p-nitrophenyl beta-D-glucopyranoside as substrate (with recombinant enzyme).</text>
    </kinetics>
    <phDependence>
        <text evidence="4">Optimum pH is 5.5.</text>
    </phDependence>
</comment>
<comment type="subunit">
    <text evidence="4 5 6">Homo- and heterohexamers.</text>
</comment>
<comment type="subcellular location">
    <subcellularLocation>
        <location evidence="7">Plastid</location>
        <location evidence="7">Chloroplast</location>
    </subcellularLocation>
</comment>
<comment type="tissue specificity">
    <text evidence="4">Expressed in young seedlings early after germination.</text>
</comment>
<comment type="developmental stage">
    <text evidence="5">Peak of expression 36 to 48 hours after imbibition.</text>
</comment>
<comment type="miscellaneous">
    <text evidence="8">Wheat is a hexaploid with three different genomes that contains at least four genes coding for GLU1: GLU1A (AC Q1XIR9), GLU1B (AC Q1XH05), GLU1C (AC Q1XH04) and GLU1D (AC D5MTF8). The monomers can aggregate in diverse combinations, reflecting the several isozymes found in the native enzyme described in PubMed:10750901. The hexameric structure is required for activity toward DIMBOA-beta-D-glucoside (PubMed:16751439).</text>
</comment>
<comment type="similarity">
    <text evidence="7">Belongs to the glycosyl hydrolase 1 family.</text>
</comment>
<gene>
    <name type="primary">GLU1B</name>
</gene>
<reference key="1">
    <citation type="journal article" date="2006" name="Plant Physiol.">
        <title>Molecular and structural characterization of hexameric beta-D-glucosidases in wheat and rye.</title>
        <authorList>
            <person name="Sue M."/>
            <person name="Yamazaki K."/>
            <person name="Yajima S."/>
            <person name="Nomura T."/>
            <person name="Matsukawa T."/>
            <person name="Iwamura H."/>
            <person name="Miyamoto T."/>
        </authorList>
    </citation>
    <scope>NUCLEOTIDE SEQUENCE [MRNA]</scope>
    <scope>FUNCTION</scope>
    <scope>CATALYTIC ACTIVITY</scope>
    <scope>DEVELOPMENTAL STAGE</scope>
    <scope>SUBUNIT</scope>
    <scope>X-RAY CRYSTALLOGRAPHY (1.80 ANGSTROMS) OF 50-569 IN COMPLEX WITH DIMBOA</scope>
    <scope>DISULFIDE BOND</scope>
    <source>
        <strain>cv. Chinese Spring</strain>
        <tissue>Shoot</tissue>
    </source>
</reference>
<reference key="2">
    <citation type="journal article" date="2000" name="Planta">
        <title>Purification and characterization of a hydroxamic acid glucoside beta-glucosidase from wheat (Triticum aestivum L.) seedlings.</title>
        <authorList>
            <person name="Sue M."/>
            <person name="Ishihara A."/>
            <person name="Iwamura H."/>
        </authorList>
    </citation>
    <scope>PROTEIN SEQUENCE OF 51-62</scope>
    <scope>FUNCTION</scope>
    <scope>CATALYTIC ACTIVITY</scope>
    <scope>BIOPHYSICOCHEMICAL PROPERTIES</scope>
    <scope>TISSUE SPECIFICITY</scope>
    <scope>SUBUNIT</scope>
    <scope>X-RAY CRYSTALLOGRAPHY (1.80 ANGSTROMS) OF 50-569</scope>
    <source>
        <strain>cv. Asakazekomugi</strain>
    </source>
</reference>
<reference key="3">
    <citation type="journal article" date="2011" name="Plant Sci.">
        <title>Active-site architecture of benzoxazinone-glucoside beta-D-glucosidases in Triticeae.</title>
        <authorList>
            <person name="Sue M."/>
            <person name="Nakamura C."/>
            <person name="Miyamoto T."/>
            <person name="Yajima S."/>
        </authorList>
    </citation>
    <scope>X-RAY CRYSTALLOGRAPHY (1.90 ANGSTROMS) OF 50-569 IN COMPLEX WITH BETA-D-GLUCOSE</scope>
</reference>
<keyword id="KW-0002">3D-structure</keyword>
<keyword id="KW-0150">Chloroplast</keyword>
<keyword id="KW-0903">Direct protein sequencing</keyword>
<keyword id="KW-1015">Disulfide bond</keyword>
<keyword id="KW-0326">Glycosidase</keyword>
<keyword id="KW-0378">Hydrolase</keyword>
<keyword id="KW-0934">Plastid</keyword>
<keyword id="KW-1185">Reference proteome</keyword>
<keyword id="KW-0809">Transit peptide</keyword>
<proteinExistence type="evidence at protein level"/>